<name>DNLJ_CHLTE</name>
<keyword id="KW-0227">DNA damage</keyword>
<keyword id="KW-0234">DNA repair</keyword>
<keyword id="KW-0235">DNA replication</keyword>
<keyword id="KW-0436">Ligase</keyword>
<keyword id="KW-0460">Magnesium</keyword>
<keyword id="KW-0464">Manganese</keyword>
<keyword id="KW-0479">Metal-binding</keyword>
<keyword id="KW-0520">NAD</keyword>
<keyword id="KW-1185">Reference proteome</keyword>
<keyword id="KW-0862">Zinc</keyword>
<organism>
    <name type="scientific">Chlorobaculum tepidum (strain ATCC 49652 / DSM 12025 / NBRC 103806 / TLS)</name>
    <name type="common">Chlorobium tepidum</name>
    <dbReference type="NCBI Taxonomy" id="194439"/>
    <lineage>
        <taxon>Bacteria</taxon>
        <taxon>Pseudomonadati</taxon>
        <taxon>Chlorobiota</taxon>
        <taxon>Chlorobiia</taxon>
        <taxon>Chlorobiales</taxon>
        <taxon>Chlorobiaceae</taxon>
        <taxon>Chlorobaculum</taxon>
    </lineage>
</organism>
<sequence>MDKAKAQQEIGKLRAEIERHNRLYYLEAKPEISDFEFDKLLKRLIMLEKEFPELVTPDSPSQRVGGGITKEFPTVVHRDPMLSLSNTYSIAEVADFCNRVEKLVAAEGGGTPEYVAELKYDGVAISLLYRDGLLVCGSTRGDGRQGDEITANLRTIPSIPLRLEMPDLPLFGTALSGEIEVRGEVYMRKDDFERLNEERPEEERFANPRNATAGTLKLQDSAEVARRRMSFVAYYLKGYDGEAPTHLKRLEQLKSMGFMTGAAAKLCKGMDEIADFIAEWSEKRWTLPYETDGVVLKLNEVSLWERLGATAKSPRWAIAYKYPAQQAKTVLQGVVFQVGRLGTITPVAELKPTRLAGSIVSRSTLHNFDEIKRLGVRIGDHVMIEKSGEVIPKVVSVVLDERPAETAEIEVPSECPVCGTRLERPEGEVNWYCPNEEGCPAQKRGRILHFASRNALDIQNLGESLVTQLVDRGLVSDAGDLYSLTQEQLAGLDRMAAKSAQNVLDALEKSKKQSYARLLFALGIRHVGAATARELAHACPSIDRLREMDEEALAAVPDIGPVIAASIRDFFAKPWVQAMLQKLAEAGLPMQAGEEKALVNNNFEGQSVIFTGALERHVRQEAEEMVRERGGRIVSSVSKKTTLVVAGKEAGSKLEKAIKLGVKVIDEDEFERML</sequence>
<dbReference type="EC" id="6.5.1.2" evidence="1"/>
<dbReference type="EMBL" id="AE006470">
    <property type="protein sequence ID" value="AAM71700.1"/>
    <property type="molecule type" value="Genomic_DNA"/>
</dbReference>
<dbReference type="RefSeq" id="NP_661358.1">
    <property type="nucleotide sequence ID" value="NC_002932.3"/>
</dbReference>
<dbReference type="RefSeq" id="WP_010932145.1">
    <property type="nucleotide sequence ID" value="NC_002932.3"/>
</dbReference>
<dbReference type="SMR" id="Q8KF74"/>
<dbReference type="STRING" id="194439.CT0457"/>
<dbReference type="EnsemblBacteria" id="AAM71700">
    <property type="protein sequence ID" value="AAM71700"/>
    <property type="gene ID" value="CT0457"/>
</dbReference>
<dbReference type="KEGG" id="cte:CT0457"/>
<dbReference type="PATRIC" id="fig|194439.7.peg.441"/>
<dbReference type="eggNOG" id="COG0272">
    <property type="taxonomic scope" value="Bacteria"/>
</dbReference>
<dbReference type="HOGENOM" id="CLU_007764_2_1_10"/>
<dbReference type="OrthoDB" id="9759736at2"/>
<dbReference type="Proteomes" id="UP000001007">
    <property type="component" value="Chromosome"/>
</dbReference>
<dbReference type="GO" id="GO:0005829">
    <property type="term" value="C:cytosol"/>
    <property type="evidence" value="ECO:0007669"/>
    <property type="project" value="TreeGrafter"/>
</dbReference>
<dbReference type="GO" id="GO:0003677">
    <property type="term" value="F:DNA binding"/>
    <property type="evidence" value="ECO:0007669"/>
    <property type="project" value="InterPro"/>
</dbReference>
<dbReference type="GO" id="GO:0003911">
    <property type="term" value="F:DNA ligase (NAD+) activity"/>
    <property type="evidence" value="ECO:0007669"/>
    <property type="project" value="UniProtKB-UniRule"/>
</dbReference>
<dbReference type="GO" id="GO:0046872">
    <property type="term" value="F:metal ion binding"/>
    <property type="evidence" value="ECO:0007669"/>
    <property type="project" value="UniProtKB-KW"/>
</dbReference>
<dbReference type="GO" id="GO:0006281">
    <property type="term" value="P:DNA repair"/>
    <property type="evidence" value="ECO:0007669"/>
    <property type="project" value="UniProtKB-KW"/>
</dbReference>
<dbReference type="GO" id="GO:0006260">
    <property type="term" value="P:DNA replication"/>
    <property type="evidence" value="ECO:0007669"/>
    <property type="project" value="UniProtKB-KW"/>
</dbReference>
<dbReference type="CDD" id="cd17748">
    <property type="entry name" value="BRCT_DNA_ligase_like"/>
    <property type="match status" value="1"/>
</dbReference>
<dbReference type="CDD" id="cd00114">
    <property type="entry name" value="LIGANc"/>
    <property type="match status" value="1"/>
</dbReference>
<dbReference type="FunFam" id="1.10.150.20:FF:000006">
    <property type="entry name" value="DNA ligase"/>
    <property type="match status" value="1"/>
</dbReference>
<dbReference type="FunFam" id="1.10.150.20:FF:000007">
    <property type="entry name" value="DNA ligase"/>
    <property type="match status" value="1"/>
</dbReference>
<dbReference type="FunFam" id="2.40.50.140:FF:000012">
    <property type="entry name" value="DNA ligase"/>
    <property type="match status" value="1"/>
</dbReference>
<dbReference type="FunFam" id="3.30.470.30:FF:000001">
    <property type="entry name" value="DNA ligase"/>
    <property type="match status" value="1"/>
</dbReference>
<dbReference type="Gene3D" id="6.20.10.30">
    <property type="match status" value="1"/>
</dbReference>
<dbReference type="Gene3D" id="1.10.150.20">
    <property type="entry name" value="5' to 3' exonuclease, C-terminal subdomain"/>
    <property type="match status" value="2"/>
</dbReference>
<dbReference type="Gene3D" id="3.40.50.10190">
    <property type="entry name" value="BRCT domain"/>
    <property type="match status" value="1"/>
</dbReference>
<dbReference type="Gene3D" id="3.30.470.30">
    <property type="entry name" value="DNA ligase/mRNA capping enzyme"/>
    <property type="match status" value="1"/>
</dbReference>
<dbReference type="Gene3D" id="1.10.287.610">
    <property type="entry name" value="Helix hairpin bin"/>
    <property type="match status" value="1"/>
</dbReference>
<dbReference type="Gene3D" id="2.40.50.140">
    <property type="entry name" value="Nucleic acid-binding proteins"/>
    <property type="match status" value="1"/>
</dbReference>
<dbReference type="HAMAP" id="MF_01588">
    <property type="entry name" value="DNA_ligase_A"/>
    <property type="match status" value="1"/>
</dbReference>
<dbReference type="InterPro" id="IPR001357">
    <property type="entry name" value="BRCT_dom"/>
</dbReference>
<dbReference type="InterPro" id="IPR036420">
    <property type="entry name" value="BRCT_dom_sf"/>
</dbReference>
<dbReference type="InterPro" id="IPR041663">
    <property type="entry name" value="DisA/LigA_HHH"/>
</dbReference>
<dbReference type="InterPro" id="IPR001679">
    <property type="entry name" value="DNA_ligase"/>
</dbReference>
<dbReference type="InterPro" id="IPR013839">
    <property type="entry name" value="DNAligase_adenylation"/>
</dbReference>
<dbReference type="InterPro" id="IPR013840">
    <property type="entry name" value="DNAligase_N"/>
</dbReference>
<dbReference type="InterPro" id="IPR003583">
    <property type="entry name" value="Hlx-hairpin-Hlx_DNA-bd_motif"/>
</dbReference>
<dbReference type="InterPro" id="IPR012340">
    <property type="entry name" value="NA-bd_OB-fold"/>
</dbReference>
<dbReference type="InterPro" id="IPR004150">
    <property type="entry name" value="NAD_DNA_ligase_OB"/>
</dbReference>
<dbReference type="InterPro" id="IPR010994">
    <property type="entry name" value="RuvA_2-like"/>
</dbReference>
<dbReference type="InterPro" id="IPR004149">
    <property type="entry name" value="Znf_DNAligase_C4"/>
</dbReference>
<dbReference type="NCBIfam" id="TIGR00575">
    <property type="entry name" value="dnlj"/>
    <property type="match status" value="1"/>
</dbReference>
<dbReference type="NCBIfam" id="NF005932">
    <property type="entry name" value="PRK07956.1"/>
    <property type="match status" value="1"/>
</dbReference>
<dbReference type="PANTHER" id="PTHR23389">
    <property type="entry name" value="CHROMOSOME TRANSMISSION FIDELITY FACTOR 18"/>
    <property type="match status" value="1"/>
</dbReference>
<dbReference type="PANTHER" id="PTHR23389:SF9">
    <property type="entry name" value="DNA LIGASE"/>
    <property type="match status" value="1"/>
</dbReference>
<dbReference type="Pfam" id="PF00533">
    <property type="entry name" value="BRCT"/>
    <property type="match status" value="1"/>
</dbReference>
<dbReference type="Pfam" id="PF01653">
    <property type="entry name" value="DNA_ligase_aden"/>
    <property type="match status" value="1"/>
</dbReference>
<dbReference type="Pfam" id="PF03120">
    <property type="entry name" value="DNA_ligase_OB"/>
    <property type="match status" value="1"/>
</dbReference>
<dbReference type="Pfam" id="PF03119">
    <property type="entry name" value="DNA_ligase_ZBD"/>
    <property type="match status" value="1"/>
</dbReference>
<dbReference type="Pfam" id="PF12826">
    <property type="entry name" value="HHH_2"/>
    <property type="match status" value="1"/>
</dbReference>
<dbReference type="PIRSF" id="PIRSF001604">
    <property type="entry name" value="LigA"/>
    <property type="match status" value="1"/>
</dbReference>
<dbReference type="SMART" id="SM00292">
    <property type="entry name" value="BRCT"/>
    <property type="match status" value="1"/>
</dbReference>
<dbReference type="SMART" id="SM00278">
    <property type="entry name" value="HhH1"/>
    <property type="match status" value="4"/>
</dbReference>
<dbReference type="SMART" id="SM00532">
    <property type="entry name" value="LIGANc"/>
    <property type="match status" value="1"/>
</dbReference>
<dbReference type="SUPFAM" id="SSF52113">
    <property type="entry name" value="BRCT domain"/>
    <property type="match status" value="1"/>
</dbReference>
<dbReference type="SUPFAM" id="SSF56091">
    <property type="entry name" value="DNA ligase/mRNA capping enzyme, catalytic domain"/>
    <property type="match status" value="1"/>
</dbReference>
<dbReference type="SUPFAM" id="SSF50249">
    <property type="entry name" value="Nucleic acid-binding proteins"/>
    <property type="match status" value="1"/>
</dbReference>
<dbReference type="SUPFAM" id="SSF47781">
    <property type="entry name" value="RuvA domain 2-like"/>
    <property type="match status" value="1"/>
</dbReference>
<dbReference type="PROSITE" id="PS50172">
    <property type="entry name" value="BRCT"/>
    <property type="match status" value="1"/>
</dbReference>
<feature type="chain" id="PRO_0000313187" description="DNA ligase">
    <location>
        <begin position="1"/>
        <end position="674"/>
    </location>
</feature>
<feature type="domain" description="BRCT" evidence="1">
    <location>
        <begin position="598"/>
        <end position="674"/>
    </location>
</feature>
<feature type="active site" description="N6-AMP-lysine intermediate" evidence="1">
    <location>
        <position position="119"/>
    </location>
</feature>
<feature type="binding site" evidence="1">
    <location>
        <begin position="34"/>
        <end position="38"/>
    </location>
    <ligand>
        <name>NAD(+)</name>
        <dbReference type="ChEBI" id="CHEBI:57540"/>
    </ligand>
</feature>
<feature type="binding site" evidence="1">
    <location>
        <begin position="83"/>
        <end position="84"/>
    </location>
    <ligand>
        <name>NAD(+)</name>
        <dbReference type="ChEBI" id="CHEBI:57540"/>
    </ligand>
</feature>
<feature type="binding site" evidence="1">
    <location>
        <position position="117"/>
    </location>
    <ligand>
        <name>NAD(+)</name>
        <dbReference type="ChEBI" id="CHEBI:57540"/>
    </ligand>
</feature>
<feature type="binding site" evidence="1">
    <location>
        <position position="140"/>
    </location>
    <ligand>
        <name>NAD(+)</name>
        <dbReference type="ChEBI" id="CHEBI:57540"/>
    </ligand>
</feature>
<feature type="binding site" evidence="1">
    <location>
        <position position="184"/>
    </location>
    <ligand>
        <name>NAD(+)</name>
        <dbReference type="ChEBI" id="CHEBI:57540"/>
    </ligand>
</feature>
<feature type="binding site" evidence="1">
    <location>
        <position position="297"/>
    </location>
    <ligand>
        <name>NAD(+)</name>
        <dbReference type="ChEBI" id="CHEBI:57540"/>
    </ligand>
</feature>
<feature type="binding site" evidence="1">
    <location>
        <position position="321"/>
    </location>
    <ligand>
        <name>NAD(+)</name>
        <dbReference type="ChEBI" id="CHEBI:57540"/>
    </ligand>
</feature>
<feature type="binding site" evidence="1">
    <location>
        <position position="415"/>
    </location>
    <ligand>
        <name>Zn(2+)</name>
        <dbReference type="ChEBI" id="CHEBI:29105"/>
    </ligand>
</feature>
<feature type="binding site" evidence="1">
    <location>
        <position position="418"/>
    </location>
    <ligand>
        <name>Zn(2+)</name>
        <dbReference type="ChEBI" id="CHEBI:29105"/>
    </ligand>
</feature>
<feature type="binding site" evidence="1">
    <location>
        <position position="433"/>
    </location>
    <ligand>
        <name>Zn(2+)</name>
        <dbReference type="ChEBI" id="CHEBI:29105"/>
    </ligand>
</feature>
<feature type="binding site" evidence="1">
    <location>
        <position position="439"/>
    </location>
    <ligand>
        <name>Zn(2+)</name>
        <dbReference type="ChEBI" id="CHEBI:29105"/>
    </ligand>
</feature>
<accession>Q8KF74</accession>
<evidence type="ECO:0000255" key="1">
    <source>
        <dbReference type="HAMAP-Rule" id="MF_01588"/>
    </source>
</evidence>
<protein>
    <recommendedName>
        <fullName evidence="1">DNA ligase</fullName>
        <ecNumber evidence="1">6.5.1.2</ecNumber>
    </recommendedName>
    <alternativeName>
        <fullName evidence="1">Polydeoxyribonucleotide synthase [NAD(+)]</fullName>
    </alternativeName>
</protein>
<comment type="function">
    <text evidence="1">DNA ligase that catalyzes the formation of phosphodiester linkages between 5'-phosphoryl and 3'-hydroxyl groups in double-stranded DNA using NAD as a coenzyme and as the energy source for the reaction. It is essential for DNA replication and repair of damaged DNA.</text>
</comment>
<comment type="catalytic activity">
    <reaction evidence="1">
        <text>NAD(+) + (deoxyribonucleotide)n-3'-hydroxyl + 5'-phospho-(deoxyribonucleotide)m = (deoxyribonucleotide)n+m + AMP + beta-nicotinamide D-nucleotide.</text>
        <dbReference type="EC" id="6.5.1.2"/>
    </reaction>
</comment>
<comment type="cofactor">
    <cofactor evidence="1">
        <name>Mg(2+)</name>
        <dbReference type="ChEBI" id="CHEBI:18420"/>
    </cofactor>
    <cofactor evidence="1">
        <name>Mn(2+)</name>
        <dbReference type="ChEBI" id="CHEBI:29035"/>
    </cofactor>
</comment>
<comment type="similarity">
    <text evidence="1">Belongs to the NAD-dependent DNA ligase family. LigA subfamily.</text>
</comment>
<gene>
    <name evidence="1" type="primary">ligA</name>
    <name type="ordered locus">CT0457</name>
</gene>
<reference key="1">
    <citation type="journal article" date="2002" name="Proc. Natl. Acad. Sci. U.S.A.">
        <title>The complete genome sequence of Chlorobium tepidum TLS, a photosynthetic, anaerobic, green-sulfur bacterium.</title>
        <authorList>
            <person name="Eisen J.A."/>
            <person name="Nelson K.E."/>
            <person name="Paulsen I.T."/>
            <person name="Heidelberg J.F."/>
            <person name="Wu M."/>
            <person name="Dodson R.J."/>
            <person name="DeBoy R.T."/>
            <person name="Gwinn M.L."/>
            <person name="Nelson W.C."/>
            <person name="Haft D.H."/>
            <person name="Hickey E.K."/>
            <person name="Peterson J.D."/>
            <person name="Durkin A.S."/>
            <person name="Kolonay J.F."/>
            <person name="Yang F."/>
            <person name="Holt I.E."/>
            <person name="Umayam L.A."/>
            <person name="Mason T.M."/>
            <person name="Brenner M."/>
            <person name="Shea T.P."/>
            <person name="Parksey D.S."/>
            <person name="Nierman W.C."/>
            <person name="Feldblyum T.V."/>
            <person name="Hansen C.L."/>
            <person name="Craven M.B."/>
            <person name="Radune D."/>
            <person name="Vamathevan J.J."/>
            <person name="Khouri H.M."/>
            <person name="White O."/>
            <person name="Gruber T.M."/>
            <person name="Ketchum K.A."/>
            <person name="Venter J.C."/>
            <person name="Tettelin H."/>
            <person name="Bryant D.A."/>
            <person name="Fraser C.M."/>
        </authorList>
    </citation>
    <scope>NUCLEOTIDE SEQUENCE [LARGE SCALE GENOMIC DNA]</scope>
    <source>
        <strain>ATCC 49652 / DSM 12025 / NBRC 103806 / TLS</strain>
    </source>
</reference>
<proteinExistence type="inferred from homology"/>